<protein>
    <recommendedName>
        <fullName evidence="2">Protein max</fullName>
    </recommendedName>
    <alternativeName>
        <fullName evidence="2">Myc-associated factor X</fullName>
    </alternativeName>
    <alternativeName>
        <fullName>Myc-binding novel HLH/LZ protein</fullName>
    </alternativeName>
    <alternativeName>
        <fullName>Protein myn</fullName>
    </alternativeName>
</protein>
<keyword id="KW-0002">3D-structure</keyword>
<keyword id="KW-0007">Acetylation</keyword>
<keyword id="KW-0010">Activator</keyword>
<keyword id="KW-0025">Alternative splicing</keyword>
<keyword id="KW-0966">Cell projection</keyword>
<keyword id="KW-0238">DNA-binding</keyword>
<keyword id="KW-0539">Nucleus</keyword>
<keyword id="KW-0597">Phosphoprotein</keyword>
<keyword id="KW-1185">Reference proteome</keyword>
<keyword id="KW-0678">Repressor</keyword>
<keyword id="KW-0804">Transcription</keyword>
<keyword id="KW-0805">Transcription regulation</keyword>
<dbReference type="EMBL" id="M63903">
    <property type="protein sequence ID" value="AAA39797.1"/>
    <property type="molecule type" value="mRNA"/>
</dbReference>
<dbReference type="EMBL" id="AK080431">
    <property type="protein sequence ID" value="BAC37914.1"/>
    <property type="molecule type" value="mRNA"/>
</dbReference>
<dbReference type="EMBL" id="AC124556">
    <property type="status" value="NOT_ANNOTATED_CDS"/>
    <property type="molecule type" value="Genomic_DNA"/>
</dbReference>
<dbReference type="EMBL" id="BC138671">
    <property type="protein sequence ID" value="AAI38672.1"/>
    <property type="molecule type" value="mRNA"/>
</dbReference>
<dbReference type="EMBL" id="BC138672">
    <property type="protein sequence ID" value="AAI38673.1"/>
    <property type="molecule type" value="mRNA"/>
</dbReference>
<dbReference type="EMBL" id="BC145369">
    <property type="protein sequence ID" value="AAI45370.1"/>
    <property type="molecule type" value="mRNA"/>
</dbReference>
<dbReference type="CCDS" id="CCDS36479.1">
    <molecule id="P28574-1"/>
</dbReference>
<dbReference type="CCDS" id="CCDS49094.1">
    <molecule id="P28574-2"/>
</dbReference>
<dbReference type="PIR" id="A38488">
    <property type="entry name" value="A38488"/>
</dbReference>
<dbReference type="RefSeq" id="NP_001139648.1">
    <molecule id="P28574-2"/>
    <property type="nucleotide sequence ID" value="NM_001146176.2"/>
</dbReference>
<dbReference type="RefSeq" id="NP_032584.2">
    <molecule id="P28574-1"/>
    <property type="nucleotide sequence ID" value="NM_008558.3"/>
</dbReference>
<dbReference type="PDB" id="1A93">
    <property type="method" value="NMR"/>
    <property type="chains" value="B=74-102"/>
</dbReference>
<dbReference type="PDB" id="2A93">
    <property type="method" value="NMR"/>
    <property type="chains" value="B=74-102"/>
</dbReference>
<dbReference type="PDB" id="3U5V">
    <property type="method" value="X-ray"/>
    <property type="resolution" value="1.70 A"/>
    <property type="chains" value="A=22-36"/>
</dbReference>
<dbReference type="PDBsum" id="1A93"/>
<dbReference type="PDBsum" id="2A93"/>
<dbReference type="PDBsum" id="3U5V"/>
<dbReference type="SMR" id="P28574"/>
<dbReference type="ComplexPortal" id="CPX-105">
    <property type="entry name" value="Mad-Max transcriptional repressor complex"/>
</dbReference>
<dbReference type="ComplexPortal" id="CPX-97">
    <property type="entry name" value="Myc-Max transcriptional activator complex"/>
</dbReference>
<dbReference type="CORUM" id="P28574"/>
<dbReference type="DIP" id="DIP-116N"/>
<dbReference type="FunCoup" id="P28574">
    <property type="interactions" value="3839"/>
</dbReference>
<dbReference type="IntAct" id="P28574">
    <property type="interactions" value="79"/>
</dbReference>
<dbReference type="MINT" id="P28574"/>
<dbReference type="STRING" id="10090.ENSMUSP00000106025"/>
<dbReference type="GlyGen" id="P28574">
    <property type="glycosylation" value="1 site, 1 O-linked glycan (1 site)"/>
</dbReference>
<dbReference type="iPTMnet" id="P28574"/>
<dbReference type="PhosphoSitePlus" id="P28574"/>
<dbReference type="jPOST" id="P28574"/>
<dbReference type="PaxDb" id="10090-ENSMUSP00000106025"/>
<dbReference type="PeptideAtlas" id="P28574"/>
<dbReference type="ProteomicsDB" id="293415">
    <molecule id="P28574-1"/>
</dbReference>
<dbReference type="ProteomicsDB" id="328864"/>
<dbReference type="ProteomicsDB" id="340525"/>
<dbReference type="Pumba" id="P28574"/>
<dbReference type="Antibodypedia" id="159">
    <property type="antibodies" value="559 antibodies from 38 providers"/>
</dbReference>
<dbReference type="DNASU" id="17187"/>
<dbReference type="Ensembl" id="ENSMUST00000082136.7">
    <molecule id="P28574-2"/>
    <property type="protein sequence ID" value="ENSMUSP00000080778.6"/>
    <property type="gene ID" value="ENSMUSG00000059436.14"/>
</dbReference>
<dbReference type="Ensembl" id="ENSMUST00000110395.11">
    <molecule id="P28574-1"/>
    <property type="protein sequence ID" value="ENSMUSP00000106025.4"/>
    <property type="gene ID" value="ENSMUSG00000059436.14"/>
</dbReference>
<dbReference type="GeneID" id="17187"/>
<dbReference type="KEGG" id="mmu:17187"/>
<dbReference type="UCSC" id="uc007nyw.2">
    <property type="organism name" value="mouse"/>
</dbReference>
<dbReference type="UCSC" id="uc007nyx.2">
    <property type="organism name" value="mouse"/>
</dbReference>
<dbReference type="AGR" id="MGI:96921"/>
<dbReference type="CTD" id="4149"/>
<dbReference type="MGI" id="MGI:96921">
    <property type="gene designation" value="Max"/>
</dbReference>
<dbReference type="VEuPathDB" id="HostDB:ENSMUSG00000059436"/>
<dbReference type="eggNOG" id="KOG2483">
    <property type="taxonomic scope" value="Eukaryota"/>
</dbReference>
<dbReference type="GeneTree" id="ENSGT00530000064011"/>
<dbReference type="HOGENOM" id="CLU_109424_1_0_1"/>
<dbReference type="InParanoid" id="P28574"/>
<dbReference type="OMA" id="YMDAHEL"/>
<dbReference type="OrthoDB" id="8964853at2759"/>
<dbReference type="PhylomeDB" id="P28574"/>
<dbReference type="TreeFam" id="TF318841"/>
<dbReference type="Reactome" id="R-MMU-8953750">
    <property type="pathway name" value="Transcriptional Regulation by E2F6"/>
</dbReference>
<dbReference type="BioGRID-ORCS" id="17187">
    <property type="hits" value="23 hits in 80 CRISPR screens"/>
</dbReference>
<dbReference type="ChiTaRS" id="Max">
    <property type="organism name" value="mouse"/>
</dbReference>
<dbReference type="EvolutionaryTrace" id="P28574"/>
<dbReference type="PRO" id="PR:P28574"/>
<dbReference type="Proteomes" id="UP000000589">
    <property type="component" value="Chromosome 12"/>
</dbReference>
<dbReference type="RNAct" id="P28574">
    <property type="molecule type" value="protein"/>
</dbReference>
<dbReference type="Bgee" id="ENSMUSG00000059436">
    <property type="expression patterns" value="Expressed in granulocyte and 219 other cell types or tissues"/>
</dbReference>
<dbReference type="ExpressionAtlas" id="P28574">
    <property type="expression patterns" value="baseline and differential"/>
</dbReference>
<dbReference type="GO" id="GO:0000785">
    <property type="term" value="C:chromatin"/>
    <property type="evidence" value="ECO:0007669"/>
    <property type="project" value="Ensembl"/>
</dbReference>
<dbReference type="GO" id="GO:0030425">
    <property type="term" value="C:dendrite"/>
    <property type="evidence" value="ECO:0007669"/>
    <property type="project" value="UniProtKB-SubCell"/>
</dbReference>
<dbReference type="GO" id="GO:0070443">
    <property type="term" value="C:Mad-Max complex"/>
    <property type="evidence" value="ECO:0000266"/>
    <property type="project" value="ComplexPortal"/>
</dbReference>
<dbReference type="GO" id="GO:0071339">
    <property type="term" value="C:MLL1 complex"/>
    <property type="evidence" value="ECO:0000250"/>
    <property type="project" value="UniProtKB"/>
</dbReference>
<dbReference type="GO" id="GO:0071943">
    <property type="term" value="C:Myc-Max complex"/>
    <property type="evidence" value="ECO:0000353"/>
    <property type="project" value="ComplexPortal"/>
</dbReference>
<dbReference type="GO" id="GO:0005634">
    <property type="term" value="C:nucleus"/>
    <property type="evidence" value="ECO:0000314"/>
    <property type="project" value="ComplexPortal"/>
</dbReference>
<dbReference type="GO" id="GO:0032993">
    <property type="term" value="C:protein-DNA complex"/>
    <property type="evidence" value="ECO:0007669"/>
    <property type="project" value="Ensembl"/>
</dbReference>
<dbReference type="GO" id="GO:0003677">
    <property type="term" value="F:DNA binding"/>
    <property type="evidence" value="ECO:0000314"/>
    <property type="project" value="MGI"/>
</dbReference>
<dbReference type="GO" id="GO:0140297">
    <property type="term" value="F:DNA-binding transcription factor binding"/>
    <property type="evidence" value="ECO:0007669"/>
    <property type="project" value="Ensembl"/>
</dbReference>
<dbReference type="GO" id="GO:0001227">
    <property type="term" value="F:DNA-binding transcription repressor activity, RNA polymerase II-specific"/>
    <property type="evidence" value="ECO:0000250"/>
    <property type="project" value="UniProtKB"/>
</dbReference>
<dbReference type="GO" id="GO:0070888">
    <property type="term" value="F:E-box binding"/>
    <property type="evidence" value="ECO:0007669"/>
    <property type="project" value="Ensembl"/>
</dbReference>
<dbReference type="GO" id="GO:0042802">
    <property type="term" value="F:identical protein binding"/>
    <property type="evidence" value="ECO:0007669"/>
    <property type="project" value="Ensembl"/>
</dbReference>
<dbReference type="GO" id="GO:0046983">
    <property type="term" value="F:protein dimerization activity"/>
    <property type="evidence" value="ECO:0007669"/>
    <property type="project" value="InterPro"/>
</dbReference>
<dbReference type="GO" id="GO:0000978">
    <property type="term" value="F:RNA polymerase II cis-regulatory region sequence-specific DNA binding"/>
    <property type="evidence" value="ECO:0000314"/>
    <property type="project" value="NTNU_SB"/>
</dbReference>
<dbReference type="GO" id="GO:0000122">
    <property type="term" value="P:negative regulation of transcription by RNA polymerase II"/>
    <property type="evidence" value="ECO:0000266"/>
    <property type="project" value="ComplexPortal"/>
</dbReference>
<dbReference type="GO" id="GO:0045893">
    <property type="term" value="P:positive regulation of DNA-templated transcription"/>
    <property type="evidence" value="ECO:0000314"/>
    <property type="project" value="ComplexPortal"/>
</dbReference>
<dbReference type="GO" id="GO:0045944">
    <property type="term" value="P:positive regulation of transcription by RNA polymerase II"/>
    <property type="evidence" value="ECO:0000314"/>
    <property type="project" value="NTNU_SB"/>
</dbReference>
<dbReference type="GO" id="GO:0006355">
    <property type="term" value="P:regulation of DNA-templated transcription"/>
    <property type="evidence" value="ECO:0000316"/>
    <property type="project" value="MGI"/>
</dbReference>
<dbReference type="GO" id="GO:0006357">
    <property type="term" value="P:regulation of transcription by RNA polymerase II"/>
    <property type="evidence" value="ECO:0000314"/>
    <property type="project" value="NTNU_SB"/>
</dbReference>
<dbReference type="CDD" id="cd11406">
    <property type="entry name" value="bHLHzip_Max"/>
    <property type="match status" value="1"/>
</dbReference>
<dbReference type="FunFam" id="4.10.280.10:FF:000023">
    <property type="entry name" value="MAX isoform 13"/>
    <property type="match status" value="1"/>
</dbReference>
<dbReference type="Gene3D" id="4.10.280.10">
    <property type="entry name" value="Helix-loop-helix DNA-binding domain"/>
    <property type="match status" value="1"/>
</dbReference>
<dbReference type="IDEAL" id="IID50243"/>
<dbReference type="InterPro" id="IPR011598">
    <property type="entry name" value="bHLH_dom"/>
</dbReference>
<dbReference type="InterPro" id="IPR036638">
    <property type="entry name" value="HLH_DNA-bd_sf"/>
</dbReference>
<dbReference type="PANTHER" id="PTHR10328:SF3">
    <property type="entry name" value="PROTEIN MAX"/>
    <property type="match status" value="1"/>
</dbReference>
<dbReference type="PANTHER" id="PTHR10328">
    <property type="entry name" value="PROTEIN MAX MYC-ASSOCIATED FACTOR X"/>
    <property type="match status" value="1"/>
</dbReference>
<dbReference type="Pfam" id="PF00010">
    <property type="entry name" value="HLH"/>
    <property type="match status" value="1"/>
</dbReference>
<dbReference type="SMART" id="SM00353">
    <property type="entry name" value="HLH"/>
    <property type="match status" value="1"/>
</dbReference>
<dbReference type="SUPFAM" id="SSF47459">
    <property type="entry name" value="HLH, helix-loop-helix DNA-binding domain"/>
    <property type="match status" value="1"/>
</dbReference>
<dbReference type="PROSITE" id="PS50888">
    <property type="entry name" value="BHLH"/>
    <property type="match status" value="1"/>
</dbReference>
<name>MAX_MOUSE</name>
<comment type="function">
    <text evidence="2">Transcription regulator. Forms a sequence-specific DNA-binding protein complex with MYC or MAD which recognizes the core sequence 5'-CAC[GA]TG-3'. The MYC:MAX complex is a transcriptional activator, whereas the MAD:MAX complex is a repressor. CpG methylation of the recognition site greatly inhibits DNA binding, suggesting that DNA methylation may regulate the MYC:MAX complex in vivo. May repress transcription via the recruitment of a chromatin remodeling complex containing H3 'Lys-9' histone methyltransferase activity. Represses MYC transcriptional activity from E-box elements (By similarity).</text>
</comment>
<comment type="subunit">
    <text evidence="5 6">Efficient DNA binding requires dimerization with another bHLH protein. Binds DNA as a heterodimer with MYC or MAD. Part of the E2F6.com-1 complex in G0 phase composed of E2F6, MGA, MAX, TFDP1, CBX3, BAT8, EUHMTASE1, RING1, RNF2, MBLR, L3MBTL2 and YAF2. Component of some MLL1/MLL complex, at least composed of the core components KMT2A/MLL1, ASH2L, HCFC1/HCF1, WDR5 and RBBP5, as well as the facultative components BACC1, CHD8, E2F6, HSP70, INO80C, KANSL1, LAS1L, MAX, MCRS1, MGA, MYST1/MOF, PELP1, PHF20, PRP31, RING2, RUVB1/TIP49A, RUVB2/TIP49B, SENP3, TAF1, TAF4, TAF6, TAF7, TAF9 and TEX10. Interacts with SPAG9. The heterodimer MYC:MAX interacts with ABI1; the interaction may enhance MYC:MAX transcriptional activity.</text>
</comment>
<comment type="interaction">
    <interactant intactId="EBI-1183003">
        <id>P28574</id>
    </interactant>
    <interactant intactId="EBI-2655009">
        <id>Q9QWV9</id>
        <label>Ccnt1</label>
    </interactant>
    <organismsDiffer>false</organismsDiffer>
    <experiments>2</experiments>
</comment>
<comment type="interaction">
    <interactant intactId="EBI-1183003">
        <id>P28574</id>
    </interactant>
    <interactant intactId="EBI-2654963">
        <id>Q99J95</id>
        <label>Cdk9</label>
    </interactant>
    <organismsDiffer>false</organismsDiffer>
    <experiments>2</experiments>
</comment>
<comment type="interaction">
    <interactant intactId="EBI-1183003">
        <id>P28574</id>
    </interactant>
    <interactant intactId="EBI-1183114">
        <id>P01108</id>
        <label>Myc</label>
    </interactant>
    <organismsDiffer>false</organismsDiffer>
    <experiments>7</experiments>
</comment>
<comment type="subcellular location">
    <subcellularLocation>
        <location>Nucleus</location>
    </subcellularLocation>
    <subcellularLocation>
        <location evidence="1">Cell projection</location>
        <location evidence="1">Dendrite</location>
    </subcellularLocation>
</comment>
<comment type="alternative products">
    <event type="alternative splicing"/>
    <isoform>
        <id>P28574-1</id>
        <name>1</name>
        <sequence type="displayed"/>
    </isoform>
    <isoform>
        <id>P28574-2</id>
        <name>2</name>
        <sequence type="described" ref="VSP_059578"/>
    </isoform>
</comment>
<comment type="induction">
    <text>By serum; in 3T3 fibroblasts.</text>
</comment>
<comment type="PTM">
    <text evidence="7">Phosphorylated.</text>
</comment>
<comment type="similarity">
    <text evidence="7">Belongs to the MAX family.</text>
</comment>
<sequence length="160" mass="18245">MSDNDDIEVESDEEQPRFQSAADKRAHHNALERKRRDHIKDSFHSLRDSVPSLQGEKASRAQILDKATEYIQYMRRKNHTHQQDIDDLKRQNALLEQQVRALEKARSSAQLQTNYPSSDNSLYTNAKGGTISAFDGGSDSSSESEPEEPQSRKKLRMEAS</sequence>
<organism>
    <name type="scientific">Mus musculus</name>
    <name type="common">Mouse</name>
    <dbReference type="NCBI Taxonomy" id="10090"/>
    <lineage>
        <taxon>Eukaryota</taxon>
        <taxon>Metazoa</taxon>
        <taxon>Chordata</taxon>
        <taxon>Craniata</taxon>
        <taxon>Vertebrata</taxon>
        <taxon>Euteleostomi</taxon>
        <taxon>Mammalia</taxon>
        <taxon>Eutheria</taxon>
        <taxon>Euarchontoglires</taxon>
        <taxon>Glires</taxon>
        <taxon>Rodentia</taxon>
        <taxon>Myomorpha</taxon>
        <taxon>Muroidea</taxon>
        <taxon>Muridae</taxon>
        <taxon>Murinae</taxon>
        <taxon>Mus</taxon>
        <taxon>Mus</taxon>
    </lineage>
</organism>
<accession>P28574</accession>
<accession>B2RS19</accession>
<accession>Q8C4Y1</accession>
<evidence type="ECO:0000250" key="1"/>
<evidence type="ECO:0000250" key="2">
    <source>
        <dbReference type="UniProtKB" id="P61244"/>
    </source>
</evidence>
<evidence type="ECO:0000255" key="3">
    <source>
        <dbReference type="PROSITE-ProRule" id="PRU00981"/>
    </source>
</evidence>
<evidence type="ECO:0000256" key="4">
    <source>
        <dbReference type="SAM" id="MobiDB-lite"/>
    </source>
</evidence>
<evidence type="ECO:0000269" key="5">
    <source>
    </source>
</evidence>
<evidence type="ECO:0000269" key="6">
    <source>
    </source>
</evidence>
<evidence type="ECO:0000305" key="7"/>
<evidence type="ECO:0000312" key="8">
    <source>
        <dbReference type="EMBL" id="AAI38672.1"/>
    </source>
</evidence>
<evidence type="ECO:0000312" key="9">
    <source>
        <dbReference type="EMBL" id="BAC37914.1"/>
    </source>
</evidence>
<evidence type="ECO:0000312" key="10">
    <source>
        <dbReference type="MGI" id="MGI:96921"/>
    </source>
</evidence>
<evidence type="ECO:0000312" key="11">
    <source>
        <dbReference type="Proteomes" id="UP000000589"/>
    </source>
</evidence>
<evidence type="ECO:0007829" key="12">
    <source>
        <dbReference type="PDB" id="1A93"/>
    </source>
</evidence>
<evidence type="ECO:0007829" key="13">
    <source>
        <dbReference type="PDB" id="3U5V"/>
    </source>
</evidence>
<feature type="initiator methionine" description="Removed" evidence="2">
    <location>
        <position position="1"/>
    </location>
</feature>
<feature type="chain" id="PRO_0000127270" description="Protein max">
    <location>
        <begin position="2"/>
        <end position="160"/>
    </location>
</feature>
<feature type="domain" description="bHLH" evidence="3">
    <location>
        <begin position="23"/>
        <end position="74"/>
    </location>
</feature>
<feature type="region of interest" description="Disordered" evidence="4">
    <location>
        <begin position="1"/>
        <end position="40"/>
    </location>
</feature>
<feature type="region of interest" description="Leucine-zipper">
    <location>
        <begin position="81"/>
        <end position="102"/>
    </location>
</feature>
<feature type="region of interest" description="Disordered" evidence="4">
    <location>
        <begin position="104"/>
        <end position="160"/>
    </location>
</feature>
<feature type="compositionally biased region" description="Acidic residues" evidence="4">
    <location>
        <begin position="1"/>
        <end position="13"/>
    </location>
</feature>
<feature type="compositionally biased region" description="Basic and acidic residues" evidence="4">
    <location>
        <begin position="29"/>
        <end position="40"/>
    </location>
</feature>
<feature type="compositionally biased region" description="Polar residues" evidence="4">
    <location>
        <begin position="107"/>
        <end position="124"/>
    </location>
</feature>
<feature type="modified residue" description="N-acetylserine" evidence="2">
    <location>
        <position position="2"/>
    </location>
</feature>
<feature type="modified residue" description="Phosphoserine" evidence="2">
    <location>
        <position position="2"/>
    </location>
</feature>
<feature type="modified residue" description="Phosphoserine" evidence="2">
    <location>
        <position position="11"/>
    </location>
</feature>
<feature type="modified residue" description="N6-acetyllysine" evidence="2">
    <location>
        <position position="66"/>
    </location>
</feature>
<feature type="modified residue" description="Phosphoserine" evidence="2">
    <location>
        <position position="107"/>
    </location>
</feature>
<feature type="modified residue" description="N6-acetyllysine" evidence="2">
    <location>
        <position position="153"/>
    </location>
</feature>
<feature type="modified residue" description="N6-acetyllysine" evidence="2">
    <location>
        <position position="154"/>
    </location>
</feature>
<feature type="splice variant" id="VSP_059578" description="In isoform 2." evidence="7">
    <location>
        <begin position="13"/>
        <end position="21"/>
    </location>
</feature>
<feature type="sequence conflict" description="In Ref. 1; AAA39797." ref="1">
    <original>P</original>
    <variation>A</variation>
    <location>
        <position position="16"/>
    </location>
</feature>
<feature type="sequence conflict" description="In Ref. 1; AAA39797." ref="1">
    <original>H</original>
    <variation>D</variation>
    <location>
        <position position="79"/>
    </location>
</feature>
<feature type="helix" evidence="13">
    <location>
        <begin position="30"/>
        <end position="36"/>
    </location>
</feature>
<feature type="helix" evidence="12">
    <location>
        <begin position="74"/>
        <end position="101"/>
    </location>
</feature>
<gene>
    <name evidence="10" type="primary">Max</name>
    <name type="synonym">Myn</name>
</gene>
<proteinExistence type="evidence at protein level"/>
<reference key="1">
    <citation type="journal article" date="1991" name="Cell">
        <title>Association of Myn, the murine homolog of max, with c-Myc stimulates methylation-sensitive DNA binding and ras cotransformation.</title>
        <authorList>
            <person name="Prendergast G.C."/>
            <person name="Lawe D."/>
            <person name="Ziff E.B."/>
        </authorList>
    </citation>
    <scope>NUCLEOTIDE SEQUENCE [MRNA] (ISOFORM 1)</scope>
</reference>
<reference key="2">
    <citation type="journal article" date="2005" name="Science">
        <title>The transcriptional landscape of the mammalian genome.</title>
        <authorList>
            <person name="Carninci P."/>
            <person name="Kasukawa T."/>
            <person name="Katayama S."/>
            <person name="Gough J."/>
            <person name="Frith M.C."/>
            <person name="Maeda N."/>
            <person name="Oyama R."/>
            <person name="Ravasi T."/>
            <person name="Lenhard B."/>
            <person name="Wells C."/>
            <person name="Kodzius R."/>
            <person name="Shimokawa K."/>
            <person name="Bajic V.B."/>
            <person name="Brenner S.E."/>
            <person name="Batalov S."/>
            <person name="Forrest A.R."/>
            <person name="Zavolan M."/>
            <person name="Davis M.J."/>
            <person name="Wilming L.G."/>
            <person name="Aidinis V."/>
            <person name="Allen J.E."/>
            <person name="Ambesi-Impiombato A."/>
            <person name="Apweiler R."/>
            <person name="Aturaliya R.N."/>
            <person name="Bailey T.L."/>
            <person name="Bansal M."/>
            <person name="Baxter L."/>
            <person name="Beisel K.W."/>
            <person name="Bersano T."/>
            <person name="Bono H."/>
            <person name="Chalk A.M."/>
            <person name="Chiu K.P."/>
            <person name="Choudhary V."/>
            <person name="Christoffels A."/>
            <person name="Clutterbuck D.R."/>
            <person name="Crowe M.L."/>
            <person name="Dalla E."/>
            <person name="Dalrymple B.P."/>
            <person name="de Bono B."/>
            <person name="Della Gatta G."/>
            <person name="di Bernardo D."/>
            <person name="Down T."/>
            <person name="Engstrom P."/>
            <person name="Fagiolini M."/>
            <person name="Faulkner G."/>
            <person name="Fletcher C.F."/>
            <person name="Fukushima T."/>
            <person name="Furuno M."/>
            <person name="Futaki S."/>
            <person name="Gariboldi M."/>
            <person name="Georgii-Hemming P."/>
            <person name="Gingeras T.R."/>
            <person name="Gojobori T."/>
            <person name="Green R.E."/>
            <person name="Gustincich S."/>
            <person name="Harbers M."/>
            <person name="Hayashi Y."/>
            <person name="Hensch T.K."/>
            <person name="Hirokawa N."/>
            <person name="Hill D."/>
            <person name="Huminiecki L."/>
            <person name="Iacono M."/>
            <person name="Ikeo K."/>
            <person name="Iwama A."/>
            <person name="Ishikawa T."/>
            <person name="Jakt M."/>
            <person name="Kanapin A."/>
            <person name="Katoh M."/>
            <person name="Kawasawa Y."/>
            <person name="Kelso J."/>
            <person name="Kitamura H."/>
            <person name="Kitano H."/>
            <person name="Kollias G."/>
            <person name="Krishnan S.P."/>
            <person name="Kruger A."/>
            <person name="Kummerfeld S.K."/>
            <person name="Kurochkin I.V."/>
            <person name="Lareau L.F."/>
            <person name="Lazarevic D."/>
            <person name="Lipovich L."/>
            <person name="Liu J."/>
            <person name="Liuni S."/>
            <person name="McWilliam S."/>
            <person name="Madan Babu M."/>
            <person name="Madera M."/>
            <person name="Marchionni L."/>
            <person name="Matsuda H."/>
            <person name="Matsuzawa S."/>
            <person name="Miki H."/>
            <person name="Mignone F."/>
            <person name="Miyake S."/>
            <person name="Morris K."/>
            <person name="Mottagui-Tabar S."/>
            <person name="Mulder N."/>
            <person name="Nakano N."/>
            <person name="Nakauchi H."/>
            <person name="Ng P."/>
            <person name="Nilsson R."/>
            <person name="Nishiguchi S."/>
            <person name="Nishikawa S."/>
            <person name="Nori F."/>
            <person name="Ohara O."/>
            <person name="Okazaki Y."/>
            <person name="Orlando V."/>
            <person name="Pang K.C."/>
            <person name="Pavan W.J."/>
            <person name="Pavesi G."/>
            <person name="Pesole G."/>
            <person name="Petrovsky N."/>
            <person name="Piazza S."/>
            <person name="Reed J."/>
            <person name="Reid J.F."/>
            <person name="Ring B.Z."/>
            <person name="Ringwald M."/>
            <person name="Rost B."/>
            <person name="Ruan Y."/>
            <person name="Salzberg S.L."/>
            <person name="Sandelin A."/>
            <person name="Schneider C."/>
            <person name="Schoenbach C."/>
            <person name="Sekiguchi K."/>
            <person name="Semple C.A."/>
            <person name="Seno S."/>
            <person name="Sessa L."/>
            <person name="Sheng Y."/>
            <person name="Shibata Y."/>
            <person name="Shimada H."/>
            <person name="Shimada K."/>
            <person name="Silva D."/>
            <person name="Sinclair B."/>
            <person name="Sperling S."/>
            <person name="Stupka E."/>
            <person name="Sugiura K."/>
            <person name="Sultana R."/>
            <person name="Takenaka Y."/>
            <person name="Taki K."/>
            <person name="Tammoja K."/>
            <person name="Tan S.L."/>
            <person name="Tang S."/>
            <person name="Taylor M.S."/>
            <person name="Tegner J."/>
            <person name="Teichmann S.A."/>
            <person name="Ueda H.R."/>
            <person name="van Nimwegen E."/>
            <person name="Verardo R."/>
            <person name="Wei C.L."/>
            <person name="Yagi K."/>
            <person name="Yamanishi H."/>
            <person name="Zabarovsky E."/>
            <person name="Zhu S."/>
            <person name="Zimmer A."/>
            <person name="Hide W."/>
            <person name="Bult C."/>
            <person name="Grimmond S.M."/>
            <person name="Teasdale R.D."/>
            <person name="Liu E.T."/>
            <person name="Brusic V."/>
            <person name="Quackenbush J."/>
            <person name="Wahlestedt C."/>
            <person name="Mattick J.S."/>
            <person name="Hume D.A."/>
            <person name="Kai C."/>
            <person name="Sasaki D."/>
            <person name="Tomaru Y."/>
            <person name="Fukuda S."/>
            <person name="Kanamori-Katayama M."/>
            <person name="Suzuki M."/>
            <person name="Aoki J."/>
            <person name="Arakawa T."/>
            <person name="Iida J."/>
            <person name="Imamura K."/>
            <person name="Itoh M."/>
            <person name="Kato T."/>
            <person name="Kawaji H."/>
            <person name="Kawagashira N."/>
            <person name="Kawashima T."/>
            <person name="Kojima M."/>
            <person name="Kondo S."/>
            <person name="Konno H."/>
            <person name="Nakano K."/>
            <person name="Ninomiya N."/>
            <person name="Nishio T."/>
            <person name="Okada M."/>
            <person name="Plessy C."/>
            <person name="Shibata K."/>
            <person name="Shiraki T."/>
            <person name="Suzuki S."/>
            <person name="Tagami M."/>
            <person name="Waki K."/>
            <person name="Watahiki A."/>
            <person name="Okamura-Oho Y."/>
            <person name="Suzuki H."/>
            <person name="Kawai J."/>
            <person name="Hayashizaki Y."/>
        </authorList>
    </citation>
    <scope>NUCLEOTIDE SEQUENCE [LARGE SCALE MRNA] (ISOFORM 2)</scope>
    <source>
        <strain evidence="9">C57BL/6J</strain>
        <tissue evidence="9">Cerebellum</tissue>
    </source>
</reference>
<reference key="3">
    <citation type="journal article" date="2009" name="PLoS Biol.">
        <title>Lineage-specific biology revealed by a finished genome assembly of the mouse.</title>
        <authorList>
            <person name="Church D.M."/>
            <person name="Goodstadt L."/>
            <person name="Hillier L.W."/>
            <person name="Zody M.C."/>
            <person name="Goldstein S."/>
            <person name="She X."/>
            <person name="Bult C.J."/>
            <person name="Agarwala R."/>
            <person name="Cherry J.L."/>
            <person name="DiCuccio M."/>
            <person name="Hlavina W."/>
            <person name="Kapustin Y."/>
            <person name="Meric P."/>
            <person name="Maglott D."/>
            <person name="Birtle Z."/>
            <person name="Marques A.C."/>
            <person name="Graves T."/>
            <person name="Zhou S."/>
            <person name="Teague B."/>
            <person name="Potamousis K."/>
            <person name="Churas C."/>
            <person name="Place M."/>
            <person name="Herschleb J."/>
            <person name="Runnheim R."/>
            <person name="Forrest D."/>
            <person name="Amos-Landgraf J."/>
            <person name="Schwartz D.C."/>
            <person name="Cheng Z."/>
            <person name="Lindblad-Toh K."/>
            <person name="Eichler E.E."/>
            <person name="Ponting C.P."/>
        </authorList>
    </citation>
    <scope>NUCLEOTIDE SEQUENCE [LARGE SCALE GENOMIC DNA]</scope>
    <source>
        <strain evidence="11">C57BL/6J</strain>
    </source>
</reference>
<reference key="4">
    <citation type="journal article" date="2004" name="Genome Res.">
        <title>The status, quality, and expansion of the NIH full-length cDNA project: the Mammalian Gene Collection (MGC).</title>
        <authorList>
            <consortium name="The MGC Project Team"/>
        </authorList>
    </citation>
    <scope>NUCLEOTIDE SEQUENCE [LARGE SCALE MRNA] (ISOFORMS 1 AND 2)</scope>
    <source>
        <tissue evidence="8">Brain</tissue>
    </source>
</reference>
<reference key="5">
    <citation type="journal article" date="2002" name="Proc. Natl. Acad. Sci. U.S.A.">
        <title>JLP: a scaffolding protein that tethers JNK/p38MAPK signaling modules and transcription factors.</title>
        <authorList>
            <person name="Lee C.M."/>
            <person name="Onesime D."/>
            <person name="Reddy C.D."/>
            <person name="Dhanasekaran N."/>
            <person name="Reddy E.P."/>
        </authorList>
    </citation>
    <scope>INTERACTION WITH SPAG9</scope>
</reference>
<reference key="6">
    <citation type="journal article" date="2010" name="Cell">
        <title>A tissue-specific atlas of mouse protein phosphorylation and expression.</title>
        <authorList>
            <person name="Huttlin E.L."/>
            <person name="Jedrychowski M.P."/>
            <person name="Elias J.E."/>
            <person name="Goswami T."/>
            <person name="Rad R."/>
            <person name="Beausoleil S.A."/>
            <person name="Villen J."/>
            <person name="Haas W."/>
            <person name="Sowa M.E."/>
            <person name="Gygi S.P."/>
        </authorList>
    </citation>
    <scope>IDENTIFICATION BY MASS SPECTROMETRY [LARGE SCALE ANALYSIS]</scope>
    <source>
        <tissue>Spleen</tissue>
    </source>
</reference>
<reference key="7">
    <citation type="journal article" date="1998" name="J. Mol. Biol.">
        <title>Insights into the mechanism of heterodimerization from the 1H-NMR solution structure of the c-Myc-Max heterodimeric leucine zipper.</title>
        <authorList>
            <person name="Lavigne P."/>
            <person name="Crump M.P."/>
            <person name="Gagne S.M."/>
            <person name="Hodges R.S."/>
            <person name="Kay C.M."/>
            <person name="Sykes B.D."/>
        </authorList>
    </citation>
    <scope>STRUCTURE BY NMR OF 70-102 IN COMPLEX WITH MYC</scope>
</reference>